<dbReference type="EMBL" id="CH379063">
    <property type="protein sequence ID" value="EAL32649.2"/>
    <property type="molecule type" value="Genomic_DNA"/>
</dbReference>
<dbReference type="RefSeq" id="XP_001355590.2">
    <property type="nucleotide sequence ID" value="XM_001355554.3"/>
</dbReference>
<dbReference type="SMR" id="Q29IK4"/>
<dbReference type="FunCoup" id="Q29IK4">
    <property type="interactions" value="1419"/>
</dbReference>
<dbReference type="STRING" id="46245.Q29IK4"/>
<dbReference type="EnsemblMetazoa" id="FBtr0274304">
    <property type="protein sequence ID" value="FBpp0272742"/>
    <property type="gene ID" value="FBgn0078399"/>
</dbReference>
<dbReference type="GeneID" id="4815928"/>
<dbReference type="KEGG" id="dpo:4815928"/>
<dbReference type="CTD" id="29093"/>
<dbReference type="eggNOG" id="KOG1711">
    <property type="taxonomic scope" value="Eukaryota"/>
</dbReference>
<dbReference type="HOGENOM" id="CLU_100005_0_0_1"/>
<dbReference type="InParanoid" id="Q29IK4"/>
<dbReference type="OMA" id="HKVIRQM"/>
<dbReference type="Proteomes" id="UP000001819">
    <property type="component" value="Chromosome X"/>
</dbReference>
<dbReference type="Bgee" id="FBgn0078399">
    <property type="expression patterns" value="Expressed in female reproductive system and 2 other cell types or tissues"/>
</dbReference>
<dbReference type="GO" id="GO:0005762">
    <property type="term" value="C:mitochondrial large ribosomal subunit"/>
    <property type="evidence" value="ECO:0000250"/>
    <property type="project" value="UniProtKB"/>
</dbReference>
<dbReference type="GO" id="GO:0005739">
    <property type="term" value="C:mitochondrion"/>
    <property type="evidence" value="ECO:0000250"/>
    <property type="project" value="UniProtKB"/>
</dbReference>
<dbReference type="GO" id="GO:0003735">
    <property type="term" value="F:structural constituent of ribosome"/>
    <property type="evidence" value="ECO:0007669"/>
    <property type="project" value="InterPro"/>
</dbReference>
<dbReference type="GO" id="GO:0006412">
    <property type="term" value="P:translation"/>
    <property type="evidence" value="ECO:0007669"/>
    <property type="project" value="InterPro"/>
</dbReference>
<dbReference type="CDD" id="cd00336">
    <property type="entry name" value="Ribosomal_L22"/>
    <property type="match status" value="1"/>
</dbReference>
<dbReference type="FunFam" id="3.90.470.10:FF:000009">
    <property type="entry name" value="39S ribosomal protein L22, mitochondrial"/>
    <property type="match status" value="1"/>
</dbReference>
<dbReference type="Gene3D" id="3.90.470.10">
    <property type="entry name" value="Ribosomal protein L22/L17"/>
    <property type="match status" value="1"/>
</dbReference>
<dbReference type="InterPro" id="IPR001063">
    <property type="entry name" value="Ribosomal_uL22"/>
</dbReference>
<dbReference type="InterPro" id="IPR047867">
    <property type="entry name" value="Ribosomal_uL22_bac/org-type"/>
</dbReference>
<dbReference type="InterPro" id="IPR036394">
    <property type="entry name" value="Ribosomal_uL22_sf"/>
</dbReference>
<dbReference type="PANTHER" id="PTHR13501">
    <property type="entry name" value="CHLOROPLAST 50S RIBOSOMAL PROTEIN L22-RELATED"/>
    <property type="match status" value="1"/>
</dbReference>
<dbReference type="PANTHER" id="PTHR13501:SF8">
    <property type="entry name" value="LARGE RIBOSOMAL SUBUNIT PROTEIN UL22M"/>
    <property type="match status" value="1"/>
</dbReference>
<dbReference type="Pfam" id="PF00237">
    <property type="entry name" value="Ribosomal_L22"/>
    <property type="match status" value="1"/>
</dbReference>
<dbReference type="SUPFAM" id="SSF54843">
    <property type="entry name" value="Ribosomal protein L22"/>
    <property type="match status" value="1"/>
</dbReference>
<gene>
    <name type="primary">mRpL22</name>
    <name type="ORF">GA18397</name>
</gene>
<feature type="transit peptide" description="Mitochondrion" evidence="2">
    <location>
        <begin position="1"/>
        <end status="unknown"/>
    </location>
</feature>
<feature type="chain" id="PRO_0000323421" description="Large ribosomal subunit protein uL22m">
    <location>
        <begin status="unknown"/>
        <end position="233"/>
    </location>
</feature>
<evidence type="ECO:0000250" key="1">
    <source>
        <dbReference type="UniProtKB" id="Q9NWU5"/>
    </source>
</evidence>
<evidence type="ECO:0000255" key="2"/>
<evidence type="ECO:0000305" key="3"/>
<sequence length="233" mass="26692">MHTVIRQMSQLRLQAMPSSALLKATASASAPSALDHSGAAVNHHSLHTAAGSGGALCASWNKHNNGPRKWLVYNKTVHPPQQPDEEPRKAYVCHMRSNIKYSPDKMWYIAAFVRGMSVDEALKQLNFVLKKGATDVKETILEAQEMAVQRHNVEYKSNLWVAESFVGKGRVFKGMRRHARGRFGQVEYKHCHYFVRLEEGQPPEHYYQEPQTPEQQYEHWLEQMRSRKVINSL</sequence>
<keyword id="KW-0496">Mitochondrion</keyword>
<keyword id="KW-1185">Reference proteome</keyword>
<keyword id="KW-0687">Ribonucleoprotein</keyword>
<keyword id="KW-0689">Ribosomal protein</keyword>
<keyword id="KW-0809">Transit peptide</keyword>
<organism>
    <name type="scientific">Drosophila pseudoobscura pseudoobscura</name>
    <name type="common">Fruit fly</name>
    <dbReference type="NCBI Taxonomy" id="46245"/>
    <lineage>
        <taxon>Eukaryota</taxon>
        <taxon>Metazoa</taxon>
        <taxon>Ecdysozoa</taxon>
        <taxon>Arthropoda</taxon>
        <taxon>Hexapoda</taxon>
        <taxon>Insecta</taxon>
        <taxon>Pterygota</taxon>
        <taxon>Neoptera</taxon>
        <taxon>Endopterygota</taxon>
        <taxon>Diptera</taxon>
        <taxon>Brachycera</taxon>
        <taxon>Muscomorpha</taxon>
        <taxon>Ephydroidea</taxon>
        <taxon>Drosophilidae</taxon>
        <taxon>Drosophila</taxon>
        <taxon>Sophophora</taxon>
    </lineage>
</organism>
<proteinExistence type="inferred from homology"/>
<comment type="subunit">
    <text evidence="1">Component of the mitochondrial ribosome large subunit (39S) which comprises a 16S rRNA and about 50 distinct proteins.</text>
</comment>
<comment type="subcellular location">
    <subcellularLocation>
        <location evidence="1">Mitochondrion</location>
    </subcellularLocation>
</comment>
<comment type="similarity">
    <text evidence="3">Belongs to the universal ribosomal protein uL22 family.</text>
</comment>
<name>RM22_DROPS</name>
<accession>Q29IK4</accession>
<reference key="1">
    <citation type="journal article" date="2005" name="Genome Res.">
        <title>Comparative genome sequencing of Drosophila pseudoobscura: chromosomal, gene, and cis-element evolution.</title>
        <authorList>
            <person name="Richards S."/>
            <person name="Liu Y."/>
            <person name="Bettencourt B.R."/>
            <person name="Hradecky P."/>
            <person name="Letovsky S."/>
            <person name="Nielsen R."/>
            <person name="Thornton K."/>
            <person name="Hubisz M.J."/>
            <person name="Chen R."/>
            <person name="Meisel R.P."/>
            <person name="Couronne O."/>
            <person name="Hua S."/>
            <person name="Smith M.A."/>
            <person name="Zhang P."/>
            <person name="Liu J."/>
            <person name="Bussemaker H.J."/>
            <person name="van Batenburg M.F."/>
            <person name="Howells S.L."/>
            <person name="Scherer S.E."/>
            <person name="Sodergren E."/>
            <person name="Matthews B.B."/>
            <person name="Crosby M.A."/>
            <person name="Schroeder A.J."/>
            <person name="Ortiz-Barrientos D."/>
            <person name="Rives C.M."/>
            <person name="Metzker M.L."/>
            <person name="Muzny D.M."/>
            <person name="Scott G."/>
            <person name="Steffen D."/>
            <person name="Wheeler D.A."/>
            <person name="Worley K.C."/>
            <person name="Havlak P."/>
            <person name="Durbin K.J."/>
            <person name="Egan A."/>
            <person name="Gill R."/>
            <person name="Hume J."/>
            <person name="Morgan M.B."/>
            <person name="Miner G."/>
            <person name="Hamilton C."/>
            <person name="Huang Y."/>
            <person name="Waldron L."/>
            <person name="Verduzco D."/>
            <person name="Clerc-Blankenburg K.P."/>
            <person name="Dubchak I."/>
            <person name="Noor M.A.F."/>
            <person name="Anderson W."/>
            <person name="White K.P."/>
            <person name="Clark A.G."/>
            <person name="Schaeffer S.W."/>
            <person name="Gelbart W.M."/>
            <person name="Weinstock G.M."/>
            <person name="Gibbs R.A."/>
        </authorList>
    </citation>
    <scope>NUCLEOTIDE SEQUENCE [LARGE SCALE GENOMIC DNA]</scope>
    <source>
        <strain>MV2-25 / Tucson 14011-0121.94</strain>
    </source>
</reference>
<protein>
    <recommendedName>
        <fullName evidence="3">Large ribosomal subunit protein uL22m</fullName>
    </recommendedName>
    <alternativeName>
        <fullName>39S ribosomal protein L22, mitochondrial</fullName>
        <shortName>L22mt</shortName>
        <shortName>MRP-L22</shortName>
    </alternativeName>
</protein>